<evidence type="ECO:0000255" key="1">
    <source>
        <dbReference type="HAMAP-Rule" id="MF_01320"/>
    </source>
</evidence>
<evidence type="ECO:0000256" key="2">
    <source>
        <dbReference type="SAM" id="MobiDB-lite"/>
    </source>
</evidence>
<evidence type="ECO:0000305" key="3"/>
<organism>
    <name type="scientific">Acidithiobacillus ferrooxidans (strain ATCC 23270 / DSM 14882 / CIP 104768 / NCIMB 8455)</name>
    <name type="common">Ferrobacillus ferrooxidans (strain ATCC 23270)</name>
    <dbReference type="NCBI Taxonomy" id="243159"/>
    <lineage>
        <taxon>Bacteria</taxon>
        <taxon>Pseudomonadati</taxon>
        <taxon>Pseudomonadota</taxon>
        <taxon>Acidithiobacillia</taxon>
        <taxon>Acidithiobacillales</taxon>
        <taxon>Acidithiobacillaceae</taxon>
        <taxon>Acidithiobacillus</taxon>
    </lineage>
</organism>
<proteinExistence type="inferred from homology"/>
<protein>
    <recommendedName>
        <fullName evidence="1">Large ribosomal subunit protein uL2</fullName>
    </recommendedName>
    <alternativeName>
        <fullName evidence="3">50S ribosomal protein L2</fullName>
    </alternativeName>
</protein>
<comment type="function">
    <text evidence="1">One of the primary rRNA binding proteins. Required for association of the 30S and 50S subunits to form the 70S ribosome, for tRNA binding and peptide bond formation. It has been suggested to have peptidyltransferase activity; this is somewhat controversial. Makes several contacts with the 16S rRNA in the 70S ribosome.</text>
</comment>
<comment type="subunit">
    <text evidence="1">Part of the 50S ribosomal subunit. Forms a bridge to the 30S subunit in the 70S ribosome.</text>
</comment>
<comment type="similarity">
    <text evidence="1">Belongs to the universal ribosomal protein uL2 family.</text>
</comment>
<sequence>MALIKTKPTSAGRRFVVKTIDTRLHKGNPHSALVEVQSHSGGRNNLGRVTRRHQGGGHKSHYRLVDFKRNKLDIPGKVERLEYDPNRSAHIALICYVDGERRYILAAKGMSVGDPVLSAEQTPIKPGNCMPLRGIPVGSVVHNVEMRPGKGGQIARSAGASVQLMAREGDYAQLRLRSGEVRRIHVSCRATIGEVGNEEHGSRQLGKAGATRWRGVRPTVRGVAMNPVDHPHGGGEGRTSGGRHPVSPWGQPTKGYRTRRNKRTSNMIVRRRSR</sequence>
<gene>
    <name evidence="1" type="primary">rplB</name>
    <name type="ordered locus">AFE_0330</name>
</gene>
<accession>B7J470</accession>
<keyword id="KW-1185">Reference proteome</keyword>
<keyword id="KW-0687">Ribonucleoprotein</keyword>
<keyword id="KW-0689">Ribosomal protein</keyword>
<keyword id="KW-0694">RNA-binding</keyword>
<keyword id="KW-0699">rRNA-binding</keyword>
<feature type="chain" id="PRO_1000141493" description="Large ribosomal subunit protein uL2">
    <location>
        <begin position="1"/>
        <end position="274"/>
    </location>
</feature>
<feature type="region of interest" description="Disordered" evidence="2">
    <location>
        <begin position="40"/>
        <end position="59"/>
    </location>
</feature>
<feature type="region of interest" description="Disordered" evidence="2">
    <location>
        <begin position="223"/>
        <end position="274"/>
    </location>
</feature>
<feature type="compositionally biased region" description="Basic residues" evidence="2">
    <location>
        <begin position="49"/>
        <end position="59"/>
    </location>
</feature>
<feature type="compositionally biased region" description="Basic residues" evidence="2">
    <location>
        <begin position="256"/>
        <end position="274"/>
    </location>
</feature>
<name>RL2_ACIF2</name>
<reference key="1">
    <citation type="journal article" date="2008" name="BMC Genomics">
        <title>Acidithiobacillus ferrooxidans metabolism: from genome sequence to industrial applications.</title>
        <authorList>
            <person name="Valdes J."/>
            <person name="Pedroso I."/>
            <person name="Quatrini R."/>
            <person name="Dodson R.J."/>
            <person name="Tettelin H."/>
            <person name="Blake R. II"/>
            <person name="Eisen J.A."/>
            <person name="Holmes D.S."/>
        </authorList>
    </citation>
    <scope>NUCLEOTIDE SEQUENCE [LARGE SCALE GENOMIC DNA]</scope>
    <source>
        <strain>ATCC 23270 / DSM 14882 / CIP 104768 / NCIMB 8455</strain>
    </source>
</reference>
<dbReference type="EMBL" id="CP001219">
    <property type="protein sequence ID" value="ACK80720.1"/>
    <property type="molecule type" value="Genomic_DNA"/>
</dbReference>
<dbReference type="RefSeq" id="WP_009565434.1">
    <property type="nucleotide sequence ID" value="NC_011761.1"/>
</dbReference>
<dbReference type="SMR" id="B7J470"/>
<dbReference type="STRING" id="243159.AFE_0330"/>
<dbReference type="PaxDb" id="243159-AFE_0330"/>
<dbReference type="GeneID" id="65279709"/>
<dbReference type="KEGG" id="afr:AFE_0330"/>
<dbReference type="eggNOG" id="COG0090">
    <property type="taxonomic scope" value="Bacteria"/>
</dbReference>
<dbReference type="HOGENOM" id="CLU_036235_2_1_6"/>
<dbReference type="Proteomes" id="UP000001362">
    <property type="component" value="Chromosome"/>
</dbReference>
<dbReference type="GO" id="GO:0015934">
    <property type="term" value="C:large ribosomal subunit"/>
    <property type="evidence" value="ECO:0007669"/>
    <property type="project" value="InterPro"/>
</dbReference>
<dbReference type="GO" id="GO:0019843">
    <property type="term" value="F:rRNA binding"/>
    <property type="evidence" value="ECO:0007669"/>
    <property type="project" value="UniProtKB-UniRule"/>
</dbReference>
<dbReference type="GO" id="GO:0003735">
    <property type="term" value="F:structural constituent of ribosome"/>
    <property type="evidence" value="ECO:0007669"/>
    <property type="project" value="InterPro"/>
</dbReference>
<dbReference type="GO" id="GO:0016740">
    <property type="term" value="F:transferase activity"/>
    <property type="evidence" value="ECO:0007669"/>
    <property type="project" value="InterPro"/>
</dbReference>
<dbReference type="GO" id="GO:0002181">
    <property type="term" value="P:cytoplasmic translation"/>
    <property type="evidence" value="ECO:0007669"/>
    <property type="project" value="TreeGrafter"/>
</dbReference>
<dbReference type="FunFam" id="2.30.30.30:FF:000001">
    <property type="entry name" value="50S ribosomal protein L2"/>
    <property type="match status" value="1"/>
</dbReference>
<dbReference type="FunFam" id="2.40.50.140:FF:000003">
    <property type="entry name" value="50S ribosomal protein L2"/>
    <property type="match status" value="1"/>
</dbReference>
<dbReference type="FunFam" id="4.10.950.10:FF:000001">
    <property type="entry name" value="50S ribosomal protein L2"/>
    <property type="match status" value="1"/>
</dbReference>
<dbReference type="Gene3D" id="2.30.30.30">
    <property type="match status" value="1"/>
</dbReference>
<dbReference type="Gene3D" id="2.40.50.140">
    <property type="entry name" value="Nucleic acid-binding proteins"/>
    <property type="match status" value="1"/>
</dbReference>
<dbReference type="Gene3D" id="4.10.950.10">
    <property type="entry name" value="Ribosomal protein L2, domain 3"/>
    <property type="match status" value="1"/>
</dbReference>
<dbReference type="HAMAP" id="MF_01320_B">
    <property type="entry name" value="Ribosomal_uL2_B"/>
    <property type="match status" value="1"/>
</dbReference>
<dbReference type="InterPro" id="IPR012340">
    <property type="entry name" value="NA-bd_OB-fold"/>
</dbReference>
<dbReference type="InterPro" id="IPR014722">
    <property type="entry name" value="Rib_uL2_dom2"/>
</dbReference>
<dbReference type="InterPro" id="IPR002171">
    <property type="entry name" value="Ribosomal_uL2"/>
</dbReference>
<dbReference type="InterPro" id="IPR005880">
    <property type="entry name" value="Ribosomal_uL2_bac/org-type"/>
</dbReference>
<dbReference type="InterPro" id="IPR022669">
    <property type="entry name" value="Ribosomal_uL2_C"/>
</dbReference>
<dbReference type="InterPro" id="IPR022671">
    <property type="entry name" value="Ribosomal_uL2_CS"/>
</dbReference>
<dbReference type="InterPro" id="IPR014726">
    <property type="entry name" value="Ribosomal_uL2_dom3"/>
</dbReference>
<dbReference type="InterPro" id="IPR022666">
    <property type="entry name" value="Ribosomal_uL2_RNA-bd_dom"/>
</dbReference>
<dbReference type="InterPro" id="IPR008991">
    <property type="entry name" value="Translation_prot_SH3-like_sf"/>
</dbReference>
<dbReference type="NCBIfam" id="TIGR01171">
    <property type="entry name" value="rplB_bact"/>
    <property type="match status" value="1"/>
</dbReference>
<dbReference type="PANTHER" id="PTHR13691:SF5">
    <property type="entry name" value="LARGE RIBOSOMAL SUBUNIT PROTEIN UL2M"/>
    <property type="match status" value="1"/>
</dbReference>
<dbReference type="PANTHER" id="PTHR13691">
    <property type="entry name" value="RIBOSOMAL PROTEIN L2"/>
    <property type="match status" value="1"/>
</dbReference>
<dbReference type="Pfam" id="PF00181">
    <property type="entry name" value="Ribosomal_L2"/>
    <property type="match status" value="1"/>
</dbReference>
<dbReference type="Pfam" id="PF03947">
    <property type="entry name" value="Ribosomal_L2_C"/>
    <property type="match status" value="1"/>
</dbReference>
<dbReference type="PIRSF" id="PIRSF002158">
    <property type="entry name" value="Ribosomal_L2"/>
    <property type="match status" value="1"/>
</dbReference>
<dbReference type="SMART" id="SM01383">
    <property type="entry name" value="Ribosomal_L2"/>
    <property type="match status" value="1"/>
</dbReference>
<dbReference type="SMART" id="SM01382">
    <property type="entry name" value="Ribosomal_L2_C"/>
    <property type="match status" value="1"/>
</dbReference>
<dbReference type="SUPFAM" id="SSF50249">
    <property type="entry name" value="Nucleic acid-binding proteins"/>
    <property type="match status" value="1"/>
</dbReference>
<dbReference type="SUPFAM" id="SSF50104">
    <property type="entry name" value="Translation proteins SH3-like domain"/>
    <property type="match status" value="1"/>
</dbReference>
<dbReference type="PROSITE" id="PS00467">
    <property type="entry name" value="RIBOSOMAL_L2"/>
    <property type="match status" value="1"/>
</dbReference>